<accession>Q8X0X0</accession>
<accession>Q7S804</accession>
<gene>
    <name type="primary">gcs-1</name>
    <name type="ORF">123A4.220</name>
    <name type="ORF">NCU01157</name>
</gene>
<organism>
    <name type="scientific">Neurospora crassa (strain ATCC 24698 / 74-OR23-1A / CBS 708.71 / DSM 1257 / FGSC 987)</name>
    <dbReference type="NCBI Taxonomy" id="367110"/>
    <lineage>
        <taxon>Eukaryota</taxon>
        <taxon>Fungi</taxon>
        <taxon>Dikarya</taxon>
        <taxon>Ascomycota</taxon>
        <taxon>Pezizomycotina</taxon>
        <taxon>Sordariomycetes</taxon>
        <taxon>Sordariomycetidae</taxon>
        <taxon>Sordariales</taxon>
        <taxon>Sordariaceae</taxon>
        <taxon>Neurospora</taxon>
    </lineage>
</organism>
<dbReference type="EC" id="6.3.2.2"/>
<dbReference type="EMBL" id="AL670009">
    <property type="protein sequence ID" value="CAD21373.1"/>
    <property type="molecule type" value="Genomic_DNA"/>
</dbReference>
<dbReference type="EMBL" id="CM002240">
    <property type="protein sequence ID" value="EAA32287.1"/>
    <property type="molecule type" value="Genomic_DNA"/>
</dbReference>
<dbReference type="RefSeq" id="XP_961523.1">
    <property type="nucleotide sequence ID" value="XM_956430.2"/>
</dbReference>
<dbReference type="SMR" id="Q8X0X0"/>
<dbReference type="FunCoup" id="Q8X0X0">
    <property type="interactions" value="372"/>
</dbReference>
<dbReference type="STRING" id="367110.Q8X0X0"/>
<dbReference type="PaxDb" id="5141-EFNCRP00000004432"/>
<dbReference type="EnsemblFungi" id="EAA32287">
    <property type="protein sequence ID" value="EAA32287"/>
    <property type="gene ID" value="NCU01157"/>
</dbReference>
<dbReference type="GeneID" id="3877703"/>
<dbReference type="KEGG" id="ncr:NCU01157"/>
<dbReference type="VEuPathDB" id="FungiDB:NCU01157"/>
<dbReference type="HOGENOM" id="CLU_010467_0_0_1"/>
<dbReference type="InParanoid" id="Q8X0X0"/>
<dbReference type="OMA" id="IAHMFIR"/>
<dbReference type="OrthoDB" id="7939818at2759"/>
<dbReference type="UniPathway" id="UPA00142">
    <property type="reaction ID" value="UER00209"/>
</dbReference>
<dbReference type="Proteomes" id="UP000001805">
    <property type="component" value="Chromosome 2, Linkage Group V"/>
</dbReference>
<dbReference type="GO" id="GO:0017109">
    <property type="term" value="C:glutamate-cysteine ligase complex"/>
    <property type="evidence" value="ECO:0000318"/>
    <property type="project" value="GO_Central"/>
</dbReference>
<dbReference type="GO" id="GO:0005524">
    <property type="term" value="F:ATP binding"/>
    <property type="evidence" value="ECO:0007669"/>
    <property type="project" value="UniProtKB-KW"/>
</dbReference>
<dbReference type="GO" id="GO:0004357">
    <property type="term" value="F:glutamate-cysteine ligase activity"/>
    <property type="evidence" value="ECO:0000318"/>
    <property type="project" value="GO_Central"/>
</dbReference>
<dbReference type="GO" id="GO:0006750">
    <property type="term" value="P:glutathione biosynthetic process"/>
    <property type="evidence" value="ECO:0000318"/>
    <property type="project" value="GO_Central"/>
</dbReference>
<dbReference type="FunFam" id="1.10.8.960:FF:000002">
    <property type="entry name" value="Glutamate-cysteine ligase Gcs1"/>
    <property type="match status" value="1"/>
</dbReference>
<dbReference type="FunFam" id="3.30.590.50:FF:000001">
    <property type="entry name" value="Glutamate-cysteine ligase Gcs1"/>
    <property type="match status" value="1"/>
</dbReference>
<dbReference type="FunFam" id="3.30.590.50:FF:000004">
    <property type="entry name" value="Glutamate-cysteine ligase Gcs1"/>
    <property type="match status" value="1"/>
</dbReference>
<dbReference type="Gene3D" id="1.10.8.960">
    <property type="match status" value="1"/>
</dbReference>
<dbReference type="Gene3D" id="3.30.590.50">
    <property type="match status" value="2"/>
</dbReference>
<dbReference type="InterPro" id="IPR004308">
    <property type="entry name" value="GCS"/>
</dbReference>
<dbReference type="InterPro" id="IPR014746">
    <property type="entry name" value="Gln_synth/guanido_kin_cat_dom"/>
</dbReference>
<dbReference type="PANTHER" id="PTHR11164">
    <property type="entry name" value="GLUTAMATE CYSTEINE LIGASE"/>
    <property type="match status" value="1"/>
</dbReference>
<dbReference type="PANTHER" id="PTHR11164:SF0">
    <property type="entry name" value="GLUTAMATE--CYSTEINE LIGASE CATALYTIC SUBUNIT"/>
    <property type="match status" value="1"/>
</dbReference>
<dbReference type="Pfam" id="PF03074">
    <property type="entry name" value="GCS"/>
    <property type="match status" value="1"/>
</dbReference>
<dbReference type="SUPFAM" id="SSF55931">
    <property type="entry name" value="Glutamine synthetase/guanido kinase"/>
    <property type="match status" value="1"/>
</dbReference>
<name>GSH1_NEUCR</name>
<keyword id="KW-0067">ATP-binding</keyword>
<keyword id="KW-0317">Glutathione biosynthesis</keyword>
<keyword id="KW-0436">Ligase</keyword>
<keyword id="KW-0547">Nucleotide-binding</keyword>
<keyword id="KW-1185">Reference proteome</keyword>
<evidence type="ECO:0000256" key="1">
    <source>
        <dbReference type="SAM" id="MobiDB-lite"/>
    </source>
</evidence>
<evidence type="ECO:0000305" key="2"/>
<reference key="1">
    <citation type="journal article" date="2003" name="Nucleic Acids Res.">
        <title>What's in the genome of a filamentous fungus? Analysis of the Neurospora genome sequence.</title>
        <authorList>
            <person name="Mannhaupt G."/>
            <person name="Montrone C."/>
            <person name="Haase D."/>
            <person name="Mewes H.-W."/>
            <person name="Aign V."/>
            <person name="Hoheisel J.D."/>
            <person name="Fartmann B."/>
            <person name="Nyakatura G."/>
            <person name="Kempken F."/>
            <person name="Maier J."/>
            <person name="Schulte U."/>
        </authorList>
    </citation>
    <scope>NUCLEOTIDE SEQUENCE [LARGE SCALE GENOMIC DNA]</scope>
    <source>
        <strain>ATCC 24698 / 74-OR23-1A / CBS 708.71 / DSM 1257 / FGSC 987</strain>
    </source>
</reference>
<reference key="2">
    <citation type="journal article" date="2003" name="Nature">
        <title>The genome sequence of the filamentous fungus Neurospora crassa.</title>
        <authorList>
            <person name="Galagan J.E."/>
            <person name="Calvo S.E."/>
            <person name="Borkovich K.A."/>
            <person name="Selker E.U."/>
            <person name="Read N.D."/>
            <person name="Jaffe D.B."/>
            <person name="FitzHugh W."/>
            <person name="Ma L.-J."/>
            <person name="Smirnov S."/>
            <person name="Purcell S."/>
            <person name="Rehman B."/>
            <person name="Elkins T."/>
            <person name="Engels R."/>
            <person name="Wang S."/>
            <person name="Nielsen C.B."/>
            <person name="Butler J."/>
            <person name="Endrizzi M."/>
            <person name="Qui D."/>
            <person name="Ianakiev P."/>
            <person name="Bell-Pedersen D."/>
            <person name="Nelson M.A."/>
            <person name="Werner-Washburne M."/>
            <person name="Selitrennikoff C.P."/>
            <person name="Kinsey J.A."/>
            <person name="Braun E.L."/>
            <person name="Zelter A."/>
            <person name="Schulte U."/>
            <person name="Kothe G.O."/>
            <person name="Jedd G."/>
            <person name="Mewes H.-W."/>
            <person name="Staben C."/>
            <person name="Marcotte E."/>
            <person name="Greenberg D."/>
            <person name="Roy A."/>
            <person name="Foley K."/>
            <person name="Naylor J."/>
            <person name="Stange-Thomann N."/>
            <person name="Barrett R."/>
            <person name="Gnerre S."/>
            <person name="Kamal M."/>
            <person name="Kamvysselis M."/>
            <person name="Mauceli E.W."/>
            <person name="Bielke C."/>
            <person name="Rudd S."/>
            <person name="Frishman D."/>
            <person name="Krystofova S."/>
            <person name="Rasmussen C."/>
            <person name="Metzenberg R.L."/>
            <person name="Perkins D.D."/>
            <person name="Kroken S."/>
            <person name="Cogoni C."/>
            <person name="Macino G."/>
            <person name="Catcheside D.E.A."/>
            <person name="Li W."/>
            <person name="Pratt R.J."/>
            <person name="Osmani S.A."/>
            <person name="DeSouza C.P.C."/>
            <person name="Glass N.L."/>
            <person name="Orbach M.J."/>
            <person name="Berglund J.A."/>
            <person name="Voelker R."/>
            <person name="Yarden O."/>
            <person name="Plamann M."/>
            <person name="Seiler S."/>
            <person name="Dunlap J.C."/>
            <person name="Radford A."/>
            <person name="Aramayo R."/>
            <person name="Natvig D.O."/>
            <person name="Alex L.A."/>
            <person name="Mannhaupt G."/>
            <person name="Ebbole D.J."/>
            <person name="Freitag M."/>
            <person name="Paulsen I."/>
            <person name="Sachs M.S."/>
            <person name="Lander E.S."/>
            <person name="Nusbaum C."/>
            <person name="Birren B.W."/>
        </authorList>
    </citation>
    <scope>NUCLEOTIDE SEQUENCE [LARGE SCALE GENOMIC DNA]</scope>
    <source>
        <strain>ATCC 24698 / 74-OR23-1A / CBS 708.71 / DSM 1257 / FGSC 987</strain>
    </source>
</reference>
<comment type="catalytic activity">
    <reaction>
        <text>L-cysteine + L-glutamate + ATP = gamma-L-glutamyl-L-cysteine + ADP + phosphate + H(+)</text>
        <dbReference type="Rhea" id="RHEA:13285"/>
        <dbReference type="ChEBI" id="CHEBI:15378"/>
        <dbReference type="ChEBI" id="CHEBI:29985"/>
        <dbReference type="ChEBI" id="CHEBI:30616"/>
        <dbReference type="ChEBI" id="CHEBI:35235"/>
        <dbReference type="ChEBI" id="CHEBI:43474"/>
        <dbReference type="ChEBI" id="CHEBI:58173"/>
        <dbReference type="ChEBI" id="CHEBI:456216"/>
        <dbReference type="EC" id="6.3.2.2"/>
    </reaction>
</comment>
<comment type="pathway">
    <text>Sulfur metabolism; glutathione biosynthesis; glutathione from L-cysteine and L-glutamate: step 1/2.</text>
</comment>
<comment type="similarity">
    <text evidence="2">Belongs to the glutamate--cysteine ligase type 3 family.</text>
</comment>
<proteinExistence type="inferred from homology"/>
<feature type="chain" id="PRO_0000192570" description="Glutamate--cysteine ligase">
    <location>
        <begin position="1"/>
        <end position="728"/>
    </location>
</feature>
<feature type="region of interest" description="Disordered" evidence="1">
    <location>
        <begin position="517"/>
        <end position="552"/>
    </location>
</feature>
<feature type="compositionally biased region" description="Low complexity" evidence="1">
    <location>
        <begin position="523"/>
        <end position="536"/>
    </location>
</feature>
<protein>
    <recommendedName>
        <fullName>Glutamate--cysteine ligase</fullName>
        <ecNumber>6.3.2.2</ecNumber>
    </recommendedName>
    <alternativeName>
        <fullName>Gamma-ECS</fullName>
        <shortName>GCS</shortName>
    </alternativeName>
    <alternativeName>
        <fullName>Gamma-glutamylcysteine synthetase</fullName>
    </alternativeName>
</protein>
<sequence>MGLLALGTALDWPDAKQQAHLVRAWGIKQLLEIWNKAKGKERDAMLWGDEIEYLVVNYSKDEPKVLLSLRQADILKALADSKTLKVTGDCAPGTEANADAGNVTLPVFHPEFGRFMLEATPGKPWGIDFKDLLTVEADMKLRRCIAKDHMLSNEHPITLTTFPRIGSPGVFTEPSYPVSGPKLRSQFVPDEIANPHIRFPTLAANIRSRRGRKVQVNVPVFRDENTPWPWKDPTVNYDLHNWPEDDDVRNGAAPDNFIHMDAMAFGMGSCCLQITFQAKNITEGRKMYDQLSPLGPILLALTAATPVYKGFIADTDVRWNQISRAVDDRTPEELGEKPLKNDRWRIPKSRYASNSTYISTDSRLRPEYMDPNLVIDPEIKQQLLDGGMDDRLATHFAHLFIRDPIVIFNEDLQELDLTKTDHFENIQSTNWQHMRFKPPPADNSIGWRVEFRPMEIQITDFENAAFSVFIVLITRAILSFDLNFYIPIVKVDENMETAHARNANLEKKFWFRKNPFPVRTTRRGGSASRSASGTSTPNSGSSRPATPPLGPVEDEYRLMSVNEVINGTAYAKATSKEVTEDAEEGEEFPGLIPLVESYLDSVNMDVATRCGLARYLDLIRKRASGELWTAAKWIREFIAKHPGYKKDSVVSEEITKDLVGAVIEIGEREKRGLGIDDLIGQVPDLEKLFGGFLKGKSPCGGGQAALEQKLKDDDAKVNGVKRKFNEEQ</sequence>